<accession>Q8R9L7</accession>
<name>MTNA_CALS4</name>
<gene>
    <name evidence="1" type="primary">mtnA</name>
    <name type="synonym">Gcn3</name>
    <name type="ordered locus">TTE1590</name>
</gene>
<organism>
    <name type="scientific">Caldanaerobacter subterraneus subsp. tengcongensis (strain DSM 15242 / JCM 11007 / NBRC 100824 / MB4)</name>
    <name type="common">Thermoanaerobacter tengcongensis</name>
    <dbReference type="NCBI Taxonomy" id="273068"/>
    <lineage>
        <taxon>Bacteria</taxon>
        <taxon>Bacillati</taxon>
        <taxon>Bacillota</taxon>
        <taxon>Clostridia</taxon>
        <taxon>Thermoanaerobacterales</taxon>
        <taxon>Thermoanaerobacteraceae</taxon>
        <taxon>Caldanaerobacter</taxon>
    </lineage>
</organism>
<keyword id="KW-0028">Amino-acid biosynthesis</keyword>
<keyword id="KW-0413">Isomerase</keyword>
<keyword id="KW-0486">Methionine biosynthesis</keyword>
<keyword id="KW-1185">Reference proteome</keyword>
<dbReference type="EC" id="5.3.1.23" evidence="1"/>
<dbReference type="EMBL" id="AE008691">
    <property type="protein sequence ID" value="AAM24794.1"/>
    <property type="molecule type" value="Genomic_DNA"/>
</dbReference>
<dbReference type="RefSeq" id="WP_011025825.1">
    <property type="nucleotide sequence ID" value="NZ_JANUCV010000001.1"/>
</dbReference>
<dbReference type="SMR" id="Q8R9L7"/>
<dbReference type="STRING" id="273068.TTE1590"/>
<dbReference type="KEGG" id="tte:TTE1590"/>
<dbReference type="eggNOG" id="COG0182">
    <property type="taxonomic scope" value="Bacteria"/>
</dbReference>
<dbReference type="HOGENOM" id="CLU_016218_1_2_9"/>
<dbReference type="OrthoDB" id="9803436at2"/>
<dbReference type="UniPathway" id="UPA00904">
    <property type="reaction ID" value="UER00874"/>
</dbReference>
<dbReference type="Proteomes" id="UP000000555">
    <property type="component" value="Chromosome"/>
</dbReference>
<dbReference type="GO" id="GO:0046523">
    <property type="term" value="F:S-methyl-5-thioribose-1-phosphate isomerase activity"/>
    <property type="evidence" value="ECO:0007669"/>
    <property type="project" value="UniProtKB-UniRule"/>
</dbReference>
<dbReference type="GO" id="GO:0019509">
    <property type="term" value="P:L-methionine salvage from methylthioadenosine"/>
    <property type="evidence" value="ECO:0007669"/>
    <property type="project" value="UniProtKB-UniRule"/>
</dbReference>
<dbReference type="FunFam" id="1.20.120.420:FF:000003">
    <property type="entry name" value="Methylthioribose-1-phosphate isomerase"/>
    <property type="match status" value="1"/>
</dbReference>
<dbReference type="FunFam" id="3.40.50.10470:FF:000006">
    <property type="entry name" value="Methylthioribose-1-phosphate isomerase"/>
    <property type="match status" value="1"/>
</dbReference>
<dbReference type="Gene3D" id="1.20.120.420">
    <property type="entry name" value="translation initiation factor eif-2b, domain 1"/>
    <property type="match status" value="1"/>
</dbReference>
<dbReference type="Gene3D" id="3.40.50.10470">
    <property type="entry name" value="Translation initiation factor eif-2b, domain 2"/>
    <property type="match status" value="1"/>
</dbReference>
<dbReference type="HAMAP" id="MF_01678">
    <property type="entry name" value="Salvage_MtnA"/>
    <property type="match status" value="1"/>
</dbReference>
<dbReference type="InterPro" id="IPR000649">
    <property type="entry name" value="IF-2B-related"/>
</dbReference>
<dbReference type="InterPro" id="IPR005251">
    <property type="entry name" value="IF-M1Pi"/>
</dbReference>
<dbReference type="InterPro" id="IPR042529">
    <property type="entry name" value="IF_2B-like_C"/>
</dbReference>
<dbReference type="InterPro" id="IPR011559">
    <property type="entry name" value="Initiation_fac_2B_a/b/d"/>
</dbReference>
<dbReference type="InterPro" id="IPR027363">
    <property type="entry name" value="M1Pi_N"/>
</dbReference>
<dbReference type="InterPro" id="IPR037171">
    <property type="entry name" value="NagB/RpiA_transferase-like"/>
</dbReference>
<dbReference type="NCBIfam" id="TIGR00524">
    <property type="entry name" value="eIF-2B_rel"/>
    <property type="match status" value="1"/>
</dbReference>
<dbReference type="NCBIfam" id="NF004326">
    <property type="entry name" value="PRK05720.1"/>
    <property type="match status" value="1"/>
</dbReference>
<dbReference type="NCBIfam" id="TIGR00512">
    <property type="entry name" value="salvage_mtnA"/>
    <property type="match status" value="1"/>
</dbReference>
<dbReference type="PANTHER" id="PTHR43475">
    <property type="entry name" value="METHYLTHIORIBOSE-1-PHOSPHATE ISOMERASE"/>
    <property type="match status" value="1"/>
</dbReference>
<dbReference type="PANTHER" id="PTHR43475:SF1">
    <property type="entry name" value="METHYLTHIORIBOSE-1-PHOSPHATE ISOMERASE"/>
    <property type="match status" value="1"/>
</dbReference>
<dbReference type="Pfam" id="PF01008">
    <property type="entry name" value="IF-2B"/>
    <property type="match status" value="1"/>
</dbReference>
<dbReference type="SUPFAM" id="SSF100950">
    <property type="entry name" value="NagB/RpiA/CoA transferase-like"/>
    <property type="match status" value="1"/>
</dbReference>
<sequence>MKEIKTMEFRDGVLYLIDQRKLPLSYEFFECRTYQDVDFAIKDMVVRGAPAIGAAAAYGVVLAAQQFMKEEKENFLKNMENALNVLSKSRPTAVNLTWAIGRMRGVLEKVKDLSVSDIYEALKEEANKIYFEDLETNKKMAKIGNEVIKPNAVILTHCNTGALATVGYGTALGVIREAHYSGKNIFVYADETRPRLQGAKLTAWELVQEGIPAKLIADSVAATLIRDGKIDIILVGADRIALNGDTANKIGTFMLSVVAKVYNVPFYVVAPTSTIDFNIETGAEIVIEERSPEEVTHINGVRIAPEGIDVYNPAFDVTPHENITGIITEKGIIRPPFRENILKLR</sequence>
<comment type="function">
    <text evidence="1">Catalyzes the interconversion of methylthioribose-1-phosphate (MTR-1-P) into methylthioribulose-1-phosphate (MTRu-1-P).</text>
</comment>
<comment type="catalytic activity">
    <reaction evidence="1">
        <text>5-(methylsulfanyl)-alpha-D-ribose 1-phosphate = 5-(methylsulfanyl)-D-ribulose 1-phosphate</text>
        <dbReference type="Rhea" id="RHEA:19989"/>
        <dbReference type="ChEBI" id="CHEBI:58533"/>
        <dbReference type="ChEBI" id="CHEBI:58548"/>
        <dbReference type="EC" id="5.3.1.23"/>
    </reaction>
</comment>
<comment type="pathway">
    <text evidence="1">Amino-acid biosynthesis; L-methionine biosynthesis via salvage pathway; L-methionine from S-methyl-5-thio-alpha-D-ribose 1-phosphate: step 1/6.</text>
</comment>
<comment type="similarity">
    <text evidence="2">Belongs to the eIF-2B alpha/beta/delta subunits family. MtnA subfamily.</text>
</comment>
<feature type="chain" id="PRO_0000357258" description="Methylthioribose-1-phosphate isomerase">
    <location>
        <begin position="1"/>
        <end position="345"/>
    </location>
</feature>
<feature type="active site" description="Proton donor" evidence="1">
    <location>
        <position position="238"/>
    </location>
</feature>
<feature type="binding site" evidence="1">
    <location>
        <begin position="47"/>
        <end position="49"/>
    </location>
    <ligand>
        <name>substrate</name>
    </ligand>
</feature>
<feature type="binding site" evidence="1">
    <location>
        <position position="90"/>
    </location>
    <ligand>
        <name>substrate</name>
    </ligand>
</feature>
<feature type="binding site" evidence="1">
    <location>
        <position position="197"/>
    </location>
    <ligand>
        <name>substrate</name>
    </ligand>
</feature>
<feature type="binding site" evidence="1">
    <location>
        <begin position="248"/>
        <end position="249"/>
    </location>
    <ligand>
        <name>substrate</name>
    </ligand>
</feature>
<feature type="site" description="Transition state stabilizer" evidence="1">
    <location>
        <position position="158"/>
    </location>
</feature>
<protein>
    <recommendedName>
        <fullName evidence="1">Methylthioribose-1-phosphate isomerase</fullName>
        <shortName evidence="1">M1Pi</shortName>
        <shortName evidence="1">MTR-1-P isomerase</shortName>
        <ecNumber evidence="1">5.3.1.23</ecNumber>
    </recommendedName>
    <alternativeName>
        <fullName evidence="1">S-methyl-5-thioribose-1-phosphate isomerase</fullName>
    </alternativeName>
</protein>
<proteinExistence type="inferred from homology"/>
<reference key="1">
    <citation type="journal article" date="2002" name="Genome Res.">
        <title>A complete sequence of the T. tengcongensis genome.</title>
        <authorList>
            <person name="Bao Q."/>
            <person name="Tian Y."/>
            <person name="Li W."/>
            <person name="Xu Z."/>
            <person name="Xuan Z."/>
            <person name="Hu S."/>
            <person name="Dong W."/>
            <person name="Yang J."/>
            <person name="Chen Y."/>
            <person name="Xue Y."/>
            <person name="Xu Y."/>
            <person name="Lai X."/>
            <person name="Huang L."/>
            <person name="Dong X."/>
            <person name="Ma Y."/>
            <person name="Ling L."/>
            <person name="Tan H."/>
            <person name="Chen R."/>
            <person name="Wang J."/>
            <person name="Yu J."/>
            <person name="Yang H."/>
        </authorList>
    </citation>
    <scope>NUCLEOTIDE SEQUENCE [LARGE SCALE GENOMIC DNA]</scope>
    <source>
        <strain>DSM 15242 / JCM 11007 / NBRC 100824 / MB4</strain>
    </source>
</reference>
<evidence type="ECO:0000255" key="1">
    <source>
        <dbReference type="HAMAP-Rule" id="MF_01678"/>
    </source>
</evidence>
<evidence type="ECO:0000305" key="2"/>